<keyword id="KW-0597">Phosphoprotein</keyword>
<keyword id="KW-1185">Reference proteome</keyword>
<protein>
    <recommendedName>
        <fullName>Uncharacterized protein CG7065</fullName>
    </recommendedName>
</protein>
<gene>
    <name type="ORF">CG7065</name>
</gene>
<proteinExistence type="evidence at protein level"/>
<organism>
    <name type="scientific">Drosophila melanogaster</name>
    <name type="common">Fruit fly</name>
    <dbReference type="NCBI Taxonomy" id="7227"/>
    <lineage>
        <taxon>Eukaryota</taxon>
        <taxon>Metazoa</taxon>
        <taxon>Ecdysozoa</taxon>
        <taxon>Arthropoda</taxon>
        <taxon>Hexapoda</taxon>
        <taxon>Insecta</taxon>
        <taxon>Pterygota</taxon>
        <taxon>Neoptera</taxon>
        <taxon>Endopterygota</taxon>
        <taxon>Diptera</taxon>
        <taxon>Brachycera</taxon>
        <taxon>Muscomorpha</taxon>
        <taxon>Ephydroidea</taxon>
        <taxon>Drosophilidae</taxon>
        <taxon>Drosophila</taxon>
        <taxon>Sophophora</taxon>
    </lineage>
</organism>
<feature type="chain" id="PRO_0000372643" description="Uncharacterized protein CG7065">
    <location>
        <begin position="1"/>
        <end position="1231"/>
    </location>
</feature>
<feature type="region of interest" description="Disordered" evidence="1">
    <location>
        <begin position="171"/>
        <end position="197"/>
    </location>
</feature>
<feature type="region of interest" description="Disordered" evidence="1">
    <location>
        <begin position="210"/>
        <end position="259"/>
    </location>
</feature>
<feature type="region of interest" description="Disordered" evidence="1">
    <location>
        <begin position="389"/>
        <end position="547"/>
    </location>
</feature>
<feature type="region of interest" description="Disordered" evidence="1">
    <location>
        <begin position="570"/>
        <end position="591"/>
    </location>
</feature>
<feature type="region of interest" description="Disordered" evidence="1">
    <location>
        <begin position="950"/>
        <end position="981"/>
    </location>
</feature>
<feature type="region of interest" description="Disordered" evidence="1">
    <location>
        <begin position="1058"/>
        <end position="1203"/>
    </location>
</feature>
<feature type="compositionally biased region" description="Basic residues" evidence="1">
    <location>
        <begin position="440"/>
        <end position="450"/>
    </location>
</feature>
<feature type="compositionally biased region" description="Basic residues" evidence="1">
    <location>
        <begin position="458"/>
        <end position="502"/>
    </location>
</feature>
<feature type="compositionally biased region" description="Basic and acidic residues" evidence="1">
    <location>
        <begin position="503"/>
        <end position="541"/>
    </location>
</feature>
<feature type="compositionally biased region" description="Polar residues" evidence="1">
    <location>
        <begin position="1076"/>
        <end position="1103"/>
    </location>
</feature>
<feature type="compositionally biased region" description="Low complexity" evidence="1">
    <location>
        <begin position="1118"/>
        <end position="1127"/>
    </location>
</feature>
<feature type="compositionally biased region" description="Pro residues" evidence="1">
    <location>
        <begin position="1178"/>
        <end position="1203"/>
    </location>
</feature>
<feature type="modified residue" description="Phosphoserine" evidence="3">
    <location>
        <position position="449"/>
    </location>
</feature>
<feature type="modified residue" description="Phosphoserine" evidence="3">
    <location>
        <position position="451"/>
    </location>
</feature>
<feature type="modified residue" description="Phosphoserine" evidence="3">
    <location>
        <position position="453"/>
    </location>
</feature>
<feature type="modified residue" description="Phosphoserine" evidence="3">
    <location>
        <position position="455"/>
    </location>
</feature>
<feature type="modified residue" description="Phosphotyrosine" evidence="3">
    <location>
        <position position="549"/>
    </location>
</feature>
<feature type="modified residue" description="Phosphoserine" evidence="3">
    <location>
        <position position="573"/>
    </location>
</feature>
<feature type="modified residue" description="Phosphoserine" evidence="2">
    <location>
        <position position="589"/>
    </location>
</feature>
<feature type="modified residue" description="Phosphothreonine" evidence="3">
    <location>
        <position position="970"/>
    </location>
</feature>
<feature type="modified residue" description="Phosphoserine" evidence="3">
    <location>
        <position position="972"/>
    </location>
</feature>
<dbReference type="EMBL" id="AE014298">
    <property type="protein sequence ID" value="AAF46448.3"/>
    <property type="molecule type" value="Genomic_DNA"/>
</dbReference>
<dbReference type="EMBL" id="BT023505">
    <property type="protein sequence ID" value="AAY84905.1"/>
    <property type="molecule type" value="mRNA"/>
</dbReference>
<dbReference type="EMBL" id="AY069601">
    <property type="protein sequence ID" value="AAL39746.1"/>
    <property type="status" value="ALT_INIT"/>
    <property type="molecule type" value="mRNA"/>
</dbReference>
<dbReference type="RefSeq" id="NP_572529.2">
    <property type="nucleotide sequence ID" value="NM_132301.4"/>
</dbReference>
<dbReference type="SMR" id="Q7YZA2"/>
<dbReference type="BioGRID" id="58299">
    <property type="interactions" value="5"/>
</dbReference>
<dbReference type="FunCoup" id="Q7YZA2">
    <property type="interactions" value="223"/>
</dbReference>
<dbReference type="IntAct" id="Q7YZA2">
    <property type="interactions" value="6"/>
</dbReference>
<dbReference type="STRING" id="7227.FBpp0071234"/>
<dbReference type="GlyGen" id="Q7YZA2">
    <property type="glycosylation" value="1 site"/>
</dbReference>
<dbReference type="iPTMnet" id="Q7YZA2"/>
<dbReference type="PaxDb" id="7227-FBpp0071234"/>
<dbReference type="DNASU" id="31844"/>
<dbReference type="EnsemblMetazoa" id="FBtr0071299">
    <property type="protein sequence ID" value="FBpp0071234"/>
    <property type="gene ID" value="FBgn0030091"/>
</dbReference>
<dbReference type="GeneID" id="31844"/>
<dbReference type="KEGG" id="dme:Dmel_CG7065"/>
<dbReference type="UCSC" id="CG7065-RA">
    <property type="organism name" value="d. melanogaster"/>
</dbReference>
<dbReference type="AGR" id="FB:FBgn0030091"/>
<dbReference type="FlyBase" id="FBgn0030091">
    <property type="gene designation" value="CG7065"/>
</dbReference>
<dbReference type="VEuPathDB" id="VectorBase:FBgn0030091"/>
<dbReference type="eggNOG" id="ENOG502QW6J">
    <property type="taxonomic scope" value="Eukaryota"/>
</dbReference>
<dbReference type="GeneTree" id="ENSGT00530000069079"/>
<dbReference type="HOGENOM" id="CLU_264758_0_0_1"/>
<dbReference type="InParanoid" id="Q7YZA2"/>
<dbReference type="OMA" id="IWCHICN"/>
<dbReference type="OrthoDB" id="5877502at2759"/>
<dbReference type="PhylomeDB" id="Q7YZA2"/>
<dbReference type="BioGRID-ORCS" id="31844">
    <property type="hits" value="1 hit in 1 CRISPR screen"/>
</dbReference>
<dbReference type="GenomeRNAi" id="31844"/>
<dbReference type="PRO" id="PR:Q7YZA2"/>
<dbReference type="Proteomes" id="UP000000803">
    <property type="component" value="Chromosome X"/>
</dbReference>
<dbReference type="Bgee" id="FBgn0030091">
    <property type="expression patterns" value="Expressed in adult olfactory receptor neuron Or13a (Drosophila) in antenna and 224 other cell types or tissues"/>
</dbReference>
<dbReference type="GO" id="GO:0016592">
    <property type="term" value="C:mediator complex"/>
    <property type="evidence" value="ECO:0000318"/>
    <property type="project" value="GO_Central"/>
</dbReference>
<dbReference type="GO" id="GO:0003713">
    <property type="term" value="F:transcription coactivator activity"/>
    <property type="evidence" value="ECO:0000318"/>
    <property type="project" value="GO_Central"/>
</dbReference>
<dbReference type="GO" id="GO:0045944">
    <property type="term" value="P:positive regulation of transcription by RNA polymerase II"/>
    <property type="evidence" value="ECO:0000318"/>
    <property type="project" value="GO_Central"/>
</dbReference>
<accession>Q7YZA2</accession>
<accession>Q8T031</accession>
<accession>Q9W386</accession>
<evidence type="ECO:0000256" key="1">
    <source>
        <dbReference type="SAM" id="MobiDB-lite"/>
    </source>
</evidence>
<evidence type="ECO:0000269" key="2">
    <source>
    </source>
</evidence>
<evidence type="ECO:0000269" key="3">
    <source>
    </source>
</evidence>
<evidence type="ECO:0000305" key="4"/>
<sequence>MSFLPGEPVPPGFEEDVSRTAVIQKQIESYTAGPLIGTEYTIELHEPAQLRPNYFCVLCQTCSDGRNVFVHWTSQAHRTKYLQTHFQKAYKELQKLKRTPNSSGDLVTATGNLVKCIEKHFGRSRNLITATGDDFRRYRSKMCSQVRDSFHFDECAGSDFSEEAQRVIRELKPDESIKSSMKKNVDGTGDSNKQHDDGNIIALDAISSDDESFGGSTASVVPVPKGRQKNNLSEDAGGRSKNQSPPPAGGVNKTQHLPTPKELAIQASKISQERYKWEKFRCMLEIQLKQLRSDTEMYESNPEKHPDYPDEWKQFWNRRYKQLQEEKKCDPNQYDYKPEWISYWKDRRIVLFDIAVNKIKKDLKEKFKLGDEDEEKTLELMERYKIRVASPRRAPATTNSDNCRKTKPNFRNNRPIVATSKLPDAVIDISDDDVDSPPSRSRHSHKRRSISRSLSPKRGGRRAVRRSRSRSPRRSYNRGSTRSRSRSMRHRSRSPAHYRGRGRGREPASKERGSSSRDFGGRHSLQRERERSSEYYHRNEGYARSSRGYESVETFRVLDSRVYPEYKVTKTSSISPTASSNKEKEKEASEPIEEGPLTVVSVLRMLSAVEEHLGSLGPKALNLLSKALAMELVKPNAAEDLLRNEDNCVFLETTKEKLKGILIAEVLDDPQKVRVIKKLITNIAEIIYQATFKGTNDAVDVKVKANANPAPIQLPFDRNLVAPKLANALVLNGYNNVSTGDMNNLLHMLTLLMKTDKQRRQLDNNNGLKFEEIKVKLGLQNNPSPDDMGIDLDELMKEVEHQLHKESVDIVNKPTGAPAKVQAADTVGGSTGLESLTDSDLQTLLQNFKFLSNEEQVHLIGHLRKLEVQDPSRVDRLRKYVNLVELRGDGESCSDFLARVVKIGGASKAKPATKFKASVMGGRTSSAMAASSASATAPKVGHSMLSAQRPNLDRDMSSMPINKQRRGRNTPSIMLDDDDEEDDDYNFDDLVMKACDSNGSASAGGGGGVVGAGVHNKPGVPPIIGVESSPNALTFKPAAATKISLKDTENIIANLMGTLSKNGTSGGSPVGGNRNYMMNQQHGAPNAQNAPNLGQNPGQNLGQKQPGAGYSNAGYPGQQQQQQQQQQHGRNFGQEAQPLMSGLSGGPNANHYPNQQGYGGYHPFAGNGVQQNYGGMVPPGPGGYVGPPPNPWASNVPPQPPFNQMPQNFMGAQQQQQQQQPHFNNMFGGRH</sequence>
<comment type="sequence caution" evidence="4">
    <conflict type="erroneous initiation">
        <sequence resource="EMBL-CDS" id="AAL39746"/>
    </conflict>
</comment>
<name>Y7065_DROME</name>
<reference key="1">
    <citation type="journal article" date="2000" name="Science">
        <title>The genome sequence of Drosophila melanogaster.</title>
        <authorList>
            <person name="Adams M.D."/>
            <person name="Celniker S.E."/>
            <person name="Holt R.A."/>
            <person name="Evans C.A."/>
            <person name="Gocayne J.D."/>
            <person name="Amanatides P.G."/>
            <person name="Scherer S.E."/>
            <person name="Li P.W."/>
            <person name="Hoskins R.A."/>
            <person name="Galle R.F."/>
            <person name="George R.A."/>
            <person name="Lewis S.E."/>
            <person name="Richards S."/>
            <person name="Ashburner M."/>
            <person name="Henderson S.N."/>
            <person name="Sutton G.G."/>
            <person name="Wortman J.R."/>
            <person name="Yandell M.D."/>
            <person name="Zhang Q."/>
            <person name="Chen L.X."/>
            <person name="Brandon R.C."/>
            <person name="Rogers Y.-H.C."/>
            <person name="Blazej R.G."/>
            <person name="Champe M."/>
            <person name="Pfeiffer B.D."/>
            <person name="Wan K.H."/>
            <person name="Doyle C."/>
            <person name="Baxter E.G."/>
            <person name="Helt G."/>
            <person name="Nelson C.R."/>
            <person name="Miklos G.L.G."/>
            <person name="Abril J.F."/>
            <person name="Agbayani A."/>
            <person name="An H.-J."/>
            <person name="Andrews-Pfannkoch C."/>
            <person name="Baldwin D."/>
            <person name="Ballew R.M."/>
            <person name="Basu A."/>
            <person name="Baxendale J."/>
            <person name="Bayraktaroglu L."/>
            <person name="Beasley E.M."/>
            <person name="Beeson K.Y."/>
            <person name="Benos P.V."/>
            <person name="Berman B.P."/>
            <person name="Bhandari D."/>
            <person name="Bolshakov S."/>
            <person name="Borkova D."/>
            <person name="Botchan M.R."/>
            <person name="Bouck J."/>
            <person name="Brokstein P."/>
            <person name="Brottier P."/>
            <person name="Burtis K.C."/>
            <person name="Busam D.A."/>
            <person name="Butler H."/>
            <person name="Cadieu E."/>
            <person name="Center A."/>
            <person name="Chandra I."/>
            <person name="Cherry J.M."/>
            <person name="Cawley S."/>
            <person name="Dahlke C."/>
            <person name="Davenport L.B."/>
            <person name="Davies P."/>
            <person name="de Pablos B."/>
            <person name="Delcher A."/>
            <person name="Deng Z."/>
            <person name="Mays A.D."/>
            <person name="Dew I."/>
            <person name="Dietz S.M."/>
            <person name="Dodson K."/>
            <person name="Doup L.E."/>
            <person name="Downes M."/>
            <person name="Dugan-Rocha S."/>
            <person name="Dunkov B.C."/>
            <person name="Dunn P."/>
            <person name="Durbin K.J."/>
            <person name="Evangelista C.C."/>
            <person name="Ferraz C."/>
            <person name="Ferriera S."/>
            <person name="Fleischmann W."/>
            <person name="Fosler C."/>
            <person name="Gabrielian A.E."/>
            <person name="Garg N.S."/>
            <person name="Gelbart W.M."/>
            <person name="Glasser K."/>
            <person name="Glodek A."/>
            <person name="Gong F."/>
            <person name="Gorrell J.H."/>
            <person name="Gu Z."/>
            <person name="Guan P."/>
            <person name="Harris M."/>
            <person name="Harris N.L."/>
            <person name="Harvey D.A."/>
            <person name="Heiman T.J."/>
            <person name="Hernandez J.R."/>
            <person name="Houck J."/>
            <person name="Hostin D."/>
            <person name="Houston K.A."/>
            <person name="Howland T.J."/>
            <person name="Wei M.-H."/>
            <person name="Ibegwam C."/>
            <person name="Jalali M."/>
            <person name="Kalush F."/>
            <person name="Karpen G.H."/>
            <person name="Ke Z."/>
            <person name="Kennison J.A."/>
            <person name="Ketchum K.A."/>
            <person name="Kimmel B.E."/>
            <person name="Kodira C.D."/>
            <person name="Kraft C.L."/>
            <person name="Kravitz S."/>
            <person name="Kulp D."/>
            <person name="Lai Z."/>
            <person name="Lasko P."/>
            <person name="Lei Y."/>
            <person name="Levitsky A.A."/>
            <person name="Li J.H."/>
            <person name="Li Z."/>
            <person name="Liang Y."/>
            <person name="Lin X."/>
            <person name="Liu X."/>
            <person name="Mattei B."/>
            <person name="McIntosh T.C."/>
            <person name="McLeod M.P."/>
            <person name="McPherson D."/>
            <person name="Merkulov G."/>
            <person name="Milshina N.V."/>
            <person name="Mobarry C."/>
            <person name="Morris J."/>
            <person name="Moshrefi A."/>
            <person name="Mount S.M."/>
            <person name="Moy M."/>
            <person name="Murphy B."/>
            <person name="Murphy L."/>
            <person name="Muzny D.M."/>
            <person name="Nelson D.L."/>
            <person name="Nelson D.R."/>
            <person name="Nelson K.A."/>
            <person name="Nixon K."/>
            <person name="Nusskern D.R."/>
            <person name="Pacleb J.M."/>
            <person name="Palazzolo M."/>
            <person name="Pittman G.S."/>
            <person name="Pan S."/>
            <person name="Pollard J."/>
            <person name="Puri V."/>
            <person name="Reese M.G."/>
            <person name="Reinert K."/>
            <person name="Remington K."/>
            <person name="Saunders R.D.C."/>
            <person name="Scheeler F."/>
            <person name="Shen H."/>
            <person name="Shue B.C."/>
            <person name="Siden-Kiamos I."/>
            <person name="Simpson M."/>
            <person name="Skupski M.P."/>
            <person name="Smith T.J."/>
            <person name="Spier E."/>
            <person name="Spradling A.C."/>
            <person name="Stapleton M."/>
            <person name="Strong R."/>
            <person name="Sun E."/>
            <person name="Svirskas R."/>
            <person name="Tector C."/>
            <person name="Turner R."/>
            <person name="Venter E."/>
            <person name="Wang A.H."/>
            <person name="Wang X."/>
            <person name="Wang Z.-Y."/>
            <person name="Wassarman D.A."/>
            <person name="Weinstock G.M."/>
            <person name="Weissenbach J."/>
            <person name="Williams S.M."/>
            <person name="Woodage T."/>
            <person name="Worley K.C."/>
            <person name="Wu D."/>
            <person name="Yang S."/>
            <person name="Yao Q.A."/>
            <person name="Ye J."/>
            <person name="Yeh R.-F."/>
            <person name="Zaveri J.S."/>
            <person name="Zhan M."/>
            <person name="Zhang G."/>
            <person name="Zhao Q."/>
            <person name="Zheng L."/>
            <person name="Zheng X.H."/>
            <person name="Zhong F.N."/>
            <person name="Zhong W."/>
            <person name="Zhou X."/>
            <person name="Zhu S.C."/>
            <person name="Zhu X."/>
            <person name="Smith H.O."/>
            <person name="Gibbs R.A."/>
            <person name="Myers E.W."/>
            <person name="Rubin G.M."/>
            <person name="Venter J.C."/>
        </authorList>
    </citation>
    <scope>NUCLEOTIDE SEQUENCE [LARGE SCALE GENOMIC DNA]</scope>
    <source>
        <strain>Berkeley</strain>
    </source>
</reference>
<reference key="2">
    <citation type="journal article" date="2002" name="Genome Biol.">
        <title>Annotation of the Drosophila melanogaster euchromatic genome: a systematic review.</title>
        <authorList>
            <person name="Misra S."/>
            <person name="Crosby M.A."/>
            <person name="Mungall C.J."/>
            <person name="Matthews B.B."/>
            <person name="Campbell K.S."/>
            <person name="Hradecky P."/>
            <person name="Huang Y."/>
            <person name="Kaminker J.S."/>
            <person name="Millburn G.H."/>
            <person name="Prochnik S.E."/>
            <person name="Smith C.D."/>
            <person name="Tupy J.L."/>
            <person name="Whitfield E.J."/>
            <person name="Bayraktaroglu L."/>
            <person name="Berman B.P."/>
            <person name="Bettencourt B.R."/>
            <person name="Celniker S.E."/>
            <person name="de Grey A.D.N.J."/>
            <person name="Drysdale R.A."/>
            <person name="Harris N.L."/>
            <person name="Richter J."/>
            <person name="Russo S."/>
            <person name="Schroeder A.J."/>
            <person name="Shu S.Q."/>
            <person name="Stapleton M."/>
            <person name="Yamada C."/>
            <person name="Ashburner M."/>
            <person name="Gelbart W.M."/>
            <person name="Rubin G.M."/>
            <person name="Lewis S.E."/>
        </authorList>
    </citation>
    <scope>GENOME REANNOTATION</scope>
    <source>
        <strain>Berkeley</strain>
    </source>
</reference>
<reference key="3">
    <citation type="submission" date="2005-06" db="EMBL/GenBank/DDBJ databases">
        <authorList>
            <person name="Stapleton M."/>
            <person name="Carlson J.W."/>
            <person name="Chavez C."/>
            <person name="Frise E."/>
            <person name="George R.A."/>
            <person name="Pacleb J.M."/>
            <person name="Park S."/>
            <person name="Wan K.H."/>
            <person name="Yu C."/>
            <person name="Celniker S.E."/>
        </authorList>
    </citation>
    <scope>NUCLEOTIDE SEQUENCE [LARGE SCALE MRNA]</scope>
    <source>
        <strain>Berkeley</strain>
        <tissue>Embryo</tissue>
    </source>
</reference>
<reference key="4">
    <citation type="journal article" date="2002" name="Genome Biol.">
        <title>A Drosophila full-length cDNA resource.</title>
        <authorList>
            <person name="Stapleton M."/>
            <person name="Carlson J.W."/>
            <person name="Brokstein P."/>
            <person name="Yu C."/>
            <person name="Champe M."/>
            <person name="George R.A."/>
            <person name="Guarin H."/>
            <person name="Kronmiller B."/>
            <person name="Pacleb J.M."/>
            <person name="Park S."/>
            <person name="Wan K.H."/>
            <person name="Rubin G.M."/>
            <person name="Celniker S.E."/>
        </authorList>
    </citation>
    <scope>NUCLEOTIDE SEQUENCE [LARGE SCALE MRNA] OF 727-1231</scope>
    <source>
        <strain>Berkeley</strain>
        <tissue>Embryo</tissue>
    </source>
</reference>
<reference key="5">
    <citation type="journal article" date="2007" name="Mol. Biosyst.">
        <title>An integrated chemical, mass spectrometric and computational strategy for (quantitative) phosphoproteomics: application to Drosophila melanogaster Kc167 cells.</title>
        <authorList>
            <person name="Bodenmiller B."/>
            <person name="Mueller L.N."/>
            <person name="Pedrioli P.G.A."/>
            <person name="Pflieger D."/>
            <person name="Juenger M.A."/>
            <person name="Eng J.K."/>
            <person name="Aebersold R."/>
            <person name="Tao W.A."/>
        </authorList>
    </citation>
    <scope>PHOSPHORYLATION [LARGE SCALE ANALYSIS] AT SER-589</scope>
    <scope>IDENTIFICATION BY MASS SPECTROMETRY</scope>
</reference>
<reference key="6">
    <citation type="journal article" date="2008" name="J. Proteome Res.">
        <title>Phosphoproteome analysis of Drosophila melanogaster embryos.</title>
        <authorList>
            <person name="Zhai B."/>
            <person name="Villen J."/>
            <person name="Beausoleil S.A."/>
            <person name="Mintseris J."/>
            <person name="Gygi S.P."/>
        </authorList>
    </citation>
    <scope>PHOSPHORYLATION [LARGE SCALE ANALYSIS] AT SER-449; SER-451; SER-453; SER-455; TYR-549; SER-573; THR-970 AND SER-972</scope>
    <scope>IDENTIFICATION BY MASS SPECTROMETRY</scope>
    <source>
        <tissue>Embryo</tissue>
    </source>
</reference>